<feature type="chain" id="PRO_0000064901" description="Protein bdm">
    <location>
        <begin position="1"/>
        <end position="71"/>
    </location>
</feature>
<name>BDM_ECOLI</name>
<sequence length="71" mass="7987">MFTYYQAENSTAEPALVNAIEQGLRAQHGVVTEDDILMELTKWVEASDNDILSDIYQQTINYVVSGQHPTL</sequence>
<gene>
    <name type="primary">bdm</name>
    <name type="synonym">yddX</name>
    <name type="ordered locus">b1481</name>
    <name type="ordered locus">JW5239</name>
</gene>
<accession>P76127</accession>
<accession>Q2MBA3</accession>
<reference key="1">
    <citation type="journal article" date="1997" name="Science">
        <title>The complete genome sequence of Escherichia coli K-12.</title>
        <authorList>
            <person name="Blattner F.R."/>
            <person name="Plunkett G. III"/>
            <person name="Bloch C.A."/>
            <person name="Perna N.T."/>
            <person name="Burland V."/>
            <person name="Riley M."/>
            <person name="Collado-Vides J."/>
            <person name="Glasner J.D."/>
            <person name="Rode C.K."/>
            <person name="Mayhew G.F."/>
            <person name="Gregor J."/>
            <person name="Davis N.W."/>
            <person name="Kirkpatrick H.A."/>
            <person name="Goeden M.A."/>
            <person name="Rose D.J."/>
            <person name="Mau B."/>
            <person name="Shao Y."/>
        </authorList>
    </citation>
    <scope>NUCLEOTIDE SEQUENCE [LARGE SCALE GENOMIC DNA]</scope>
    <source>
        <strain>K12 / MG1655 / ATCC 47076</strain>
    </source>
</reference>
<reference key="2">
    <citation type="journal article" date="2006" name="Mol. Syst. Biol.">
        <title>Highly accurate genome sequences of Escherichia coli K-12 strains MG1655 and W3110.</title>
        <authorList>
            <person name="Hayashi K."/>
            <person name="Morooka N."/>
            <person name="Yamamoto Y."/>
            <person name="Fujita K."/>
            <person name="Isono K."/>
            <person name="Choi S."/>
            <person name="Ohtsubo E."/>
            <person name="Baba T."/>
            <person name="Wanner B.L."/>
            <person name="Mori H."/>
            <person name="Horiuchi T."/>
        </authorList>
    </citation>
    <scope>NUCLEOTIDE SEQUENCE [LARGE SCALE GENOMIC DNA]</scope>
    <source>
        <strain>K12 / W3110 / ATCC 27325 / DSM 5911</strain>
    </source>
</reference>
<reference key="3">
    <citation type="journal article" date="1999" name="J. Bacteriol.">
        <title>Abiotic surface sensing and biofilm-dependent regulation of gene expression in Escherichia coli.</title>
        <authorList>
            <person name="Prigent-Combaret C."/>
            <person name="Vidal O."/>
            <person name="Dorel C."/>
            <person name="Lejeune P."/>
        </authorList>
    </citation>
    <scope>INDUCTION</scope>
    <source>
        <strain>K12 / MC4100 / PHL644</strain>
    </source>
</reference>
<protein>
    <recommendedName>
        <fullName>Protein bdm</fullName>
    </recommendedName>
    <alternativeName>
        <fullName>Biofilm-dependent modulation protein</fullName>
    </alternativeName>
</protein>
<keyword id="KW-1185">Reference proteome</keyword>
<comment type="induction">
    <text evidence="1">Expression is reduced in biofilms and is repressed by a high salt concentration.</text>
</comment>
<proteinExistence type="evidence at transcript level"/>
<evidence type="ECO:0000269" key="1">
    <source>
    </source>
</evidence>
<organism>
    <name type="scientific">Escherichia coli (strain K12)</name>
    <dbReference type="NCBI Taxonomy" id="83333"/>
    <lineage>
        <taxon>Bacteria</taxon>
        <taxon>Pseudomonadati</taxon>
        <taxon>Pseudomonadota</taxon>
        <taxon>Gammaproteobacteria</taxon>
        <taxon>Enterobacterales</taxon>
        <taxon>Enterobacteriaceae</taxon>
        <taxon>Escherichia</taxon>
    </lineage>
</organism>
<dbReference type="EMBL" id="U00096">
    <property type="protein sequence ID" value="AAC74554.2"/>
    <property type="molecule type" value="Genomic_DNA"/>
</dbReference>
<dbReference type="EMBL" id="AP009048">
    <property type="protein sequence ID" value="BAE76453.1"/>
    <property type="molecule type" value="Genomic_DNA"/>
</dbReference>
<dbReference type="PIR" id="D64901">
    <property type="entry name" value="D64901"/>
</dbReference>
<dbReference type="RefSeq" id="NP_415998.4">
    <property type="nucleotide sequence ID" value="NC_000913.3"/>
</dbReference>
<dbReference type="RefSeq" id="WP_000495771.1">
    <property type="nucleotide sequence ID" value="NZ_STEB01000054.1"/>
</dbReference>
<dbReference type="SMR" id="P76127"/>
<dbReference type="BioGRID" id="4260210">
    <property type="interactions" value="12"/>
</dbReference>
<dbReference type="FunCoup" id="P76127">
    <property type="interactions" value="4"/>
</dbReference>
<dbReference type="STRING" id="511145.b1481"/>
<dbReference type="PaxDb" id="511145-b1481"/>
<dbReference type="EnsemblBacteria" id="AAC74554">
    <property type="protein sequence ID" value="AAC74554"/>
    <property type="gene ID" value="b1481"/>
</dbReference>
<dbReference type="GeneID" id="946041"/>
<dbReference type="KEGG" id="ecj:JW5239"/>
<dbReference type="KEGG" id="eco:b1481"/>
<dbReference type="KEGG" id="ecoc:C3026_08585"/>
<dbReference type="PATRIC" id="fig|1411691.4.peg.786"/>
<dbReference type="EchoBASE" id="EB4048"/>
<dbReference type="eggNOG" id="ENOG5032SK6">
    <property type="taxonomic scope" value="Bacteria"/>
</dbReference>
<dbReference type="HOGENOM" id="CLU_186729_0_0_6"/>
<dbReference type="InParanoid" id="P76127"/>
<dbReference type="OMA" id="THYSANT"/>
<dbReference type="OrthoDB" id="6607066at2"/>
<dbReference type="PhylomeDB" id="P76127"/>
<dbReference type="BioCyc" id="EcoCyc:G6776-MONOMER"/>
<dbReference type="PRO" id="PR:P76127"/>
<dbReference type="Proteomes" id="UP000000625">
    <property type="component" value="Chromosome"/>
</dbReference>
<dbReference type="GO" id="GO:1902210">
    <property type="term" value="P:positive regulation of bacterial-type flagellum assembly"/>
    <property type="evidence" value="ECO:0000315"/>
    <property type="project" value="EcoCyc"/>
</dbReference>
<dbReference type="InterPro" id="IPR019625">
    <property type="entry name" value="Biofilm-dep_modulation_Bdm_put"/>
</dbReference>
<dbReference type="NCBIfam" id="NF008515">
    <property type="entry name" value="PRK11436.1"/>
    <property type="match status" value="1"/>
</dbReference>
<dbReference type="Pfam" id="PF10684">
    <property type="entry name" value="BDM"/>
    <property type="match status" value="1"/>
</dbReference>